<feature type="chain" id="PRO_0000062517" description="Ribulose bisphosphate carboxylase large chain">
    <location>
        <begin position="1" status="less than"/>
        <end position="455" status="greater than"/>
    </location>
</feature>
<feature type="active site" description="Proton acceptor" evidence="1">
    <location>
        <position position="166"/>
    </location>
</feature>
<feature type="active site" description="Proton acceptor" evidence="1">
    <location>
        <position position="285"/>
    </location>
</feature>
<feature type="binding site" description="in homodimeric partner" evidence="1">
    <location>
        <position position="114"/>
    </location>
    <ligand>
        <name>substrate</name>
    </ligand>
</feature>
<feature type="binding site" evidence="1">
    <location>
        <position position="164"/>
    </location>
    <ligand>
        <name>substrate</name>
    </ligand>
</feature>
<feature type="binding site" evidence="1">
    <location>
        <position position="168"/>
    </location>
    <ligand>
        <name>substrate</name>
    </ligand>
</feature>
<feature type="binding site" description="via carbamate group" evidence="1">
    <location>
        <position position="192"/>
    </location>
    <ligand>
        <name>Mg(2+)</name>
        <dbReference type="ChEBI" id="CHEBI:18420"/>
    </ligand>
</feature>
<feature type="binding site" evidence="1">
    <location>
        <position position="194"/>
    </location>
    <ligand>
        <name>Mg(2+)</name>
        <dbReference type="ChEBI" id="CHEBI:18420"/>
    </ligand>
</feature>
<feature type="binding site" evidence="1">
    <location>
        <position position="195"/>
    </location>
    <ligand>
        <name>Mg(2+)</name>
        <dbReference type="ChEBI" id="CHEBI:18420"/>
    </ligand>
</feature>
<feature type="binding site" evidence="1">
    <location>
        <position position="286"/>
    </location>
    <ligand>
        <name>substrate</name>
    </ligand>
</feature>
<feature type="binding site" evidence="1">
    <location>
        <position position="318"/>
    </location>
    <ligand>
        <name>substrate</name>
    </ligand>
</feature>
<feature type="binding site" evidence="1">
    <location>
        <position position="370"/>
    </location>
    <ligand>
        <name>substrate</name>
    </ligand>
</feature>
<feature type="site" description="Transition state stabilizer" evidence="1">
    <location>
        <position position="325"/>
    </location>
</feature>
<feature type="modified residue" description="N6,N6,N6-trimethyllysine" evidence="1">
    <location>
        <position position="5"/>
    </location>
</feature>
<feature type="modified residue" description="N6-carboxylysine" evidence="1">
    <location>
        <position position="192"/>
    </location>
</feature>
<feature type="disulfide bond" description="Interchain; in linked form" evidence="1">
    <location>
        <position position="238"/>
    </location>
</feature>
<feature type="non-terminal residue">
    <location>
        <position position="1"/>
    </location>
</feature>
<feature type="non-terminal residue">
    <location>
        <position position="455"/>
    </location>
</feature>
<comment type="function">
    <text evidence="1">RuBisCO catalyzes two reactions: the carboxylation of D-ribulose 1,5-bisphosphate, the primary event in carbon dioxide fixation, as well as the oxidative fragmentation of the pentose substrate in the photorespiration process. Both reactions occur simultaneously and in competition at the same active site.</text>
</comment>
<comment type="catalytic activity">
    <reaction evidence="1">
        <text>2 (2R)-3-phosphoglycerate + 2 H(+) = D-ribulose 1,5-bisphosphate + CO2 + H2O</text>
        <dbReference type="Rhea" id="RHEA:23124"/>
        <dbReference type="ChEBI" id="CHEBI:15377"/>
        <dbReference type="ChEBI" id="CHEBI:15378"/>
        <dbReference type="ChEBI" id="CHEBI:16526"/>
        <dbReference type="ChEBI" id="CHEBI:57870"/>
        <dbReference type="ChEBI" id="CHEBI:58272"/>
        <dbReference type="EC" id="4.1.1.39"/>
    </reaction>
</comment>
<comment type="catalytic activity">
    <reaction evidence="1">
        <text>D-ribulose 1,5-bisphosphate + O2 = 2-phosphoglycolate + (2R)-3-phosphoglycerate + 2 H(+)</text>
        <dbReference type="Rhea" id="RHEA:36631"/>
        <dbReference type="ChEBI" id="CHEBI:15378"/>
        <dbReference type="ChEBI" id="CHEBI:15379"/>
        <dbReference type="ChEBI" id="CHEBI:57870"/>
        <dbReference type="ChEBI" id="CHEBI:58033"/>
        <dbReference type="ChEBI" id="CHEBI:58272"/>
    </reaction>
</comment>
<comment type="cofactor">
    <cofactor evidence="1">
        <name>Mg(2+)</name>
        <dbReference type="ChEBI" id="CHEBI:18420"/>
    </cofactor>
    <text evidence="1">Binds 1 Mg(2+) ion per subunit.</text>
</comment>
<comment type="subunit">
    <text evidence="1">Heterohexadecamer of 8 large chains and 8 small chains; disulfide-linked. The disulfide link is formed within the large subunit homodimers.</text>
</comment>
<comment type="subcellular location">
    <subcellularLocation>
        <location>Plastid</location>
        <location>Chloroplast</location>
    </subcellularLocation>
</comment>
<comment type="PTM">
    <text evidence="1">The disulfide bond which can form in the large chain dimeric partners within the hexadecamer appears to be associated with oxidative stress and protein turnover.</text>
</comment>
<comment type="miscellaneous">
    <text evidence="1">The basic functional RuBisCO is composed of a large chain homodimer in a 'head-to-tail' conformation. In form I RuBisCO this homodimer is arranged in a barrel-like tetramer with the small subunits forming a tetrameric 'cap' on each end of the 'barrel'.</text>
</comment>
<comment type="similarity">
    <text evidence="1">Belongs to the RuBisCO large chain family. Type I subfamily.</text>
</comment>
<organism>
    <name type="scientific">Lupinus latifolius</name>
    <name type="common">Broad-leaved lupine</name>
    <dbReference type="NCBI Taxonomy" id="53229"/>
    <lineage>
        <taxon>Eukaryota</taxon>
        <taxon>Viridiplantae</taxon>
        <taxon>Streptophyta</taxon>
        <taxon>Embryophyta</taxon>
        <taxon>Tracheophyta</taxon>
        <taxon>Spermatophyta</taxon>
        <taxon>Magnoliopsida</taxon>
        <taxon>eudicotyledons</taxon>
        <taxon>Gunneridae</taxon>
        <taxon>Pentapetalae</taxon>
        <taxon>rosids</taxon>
        <taxon>fabids</taxon>
        <taxon>Fabales</taxon>
        <taxon>Fabaceae</taxon>
        <taxon>Papilionoideae</taxon>
        <taxon>50 kb inversion clade</taxon>
        <taxon>genistoids sensu lato</taxon>
        <taxon>core genistoids</taxon>
        <taxon>Genisteae</taxon>
        <taxon>Lupinus</taxon>
    </lineage>
</organism>
<geneLocation type="chloroplast"/>
<dbReference type="EC" id="4.1.1.39" evidence="1"/>
<dbReference type="EMBL" id="Z70059">
    <property type="protein sequence ID" value="CAA93918.1"/>
    <property type="molecule type" value="Genomic_DNA"/>
</dbReference>
<dbReference type="SMR" id="P69582"/>
<dbReference type="GO" id="GO:0009507">
    <property type="term" value="C:chloroplast"/>
    <property type="evidence" value="ECO:0007669"/>
    <property type="project" value="UniProtKB-SubCell"/>
</dbReference>
<dbReference type="GO" id="GO:0000287">
    <property type="term" value="F:magnesium ion binding"/>
    <property type="evidence" value="ECO:0007669"/>
    <property type="project" value="InterPro"/>
</dbReference>
<dbReference type="GO" id="GO:0004497">
    <property type="term" value="F:monooxygenase activity"/>
    <property type="evidence" value="ECO:0007669"/>
    <property type="project" value="UniProtKB-KW"/>
</dbReference>
<dbReference type="GO" id="GO:0016984">
    <property type="term" value="F:ribulose-bisphosphate carboxylase activity"/>
    <property type="evidence" value="ECO:0007669"/>
    <property type="project" value="UniProtKB-EC"/>
</dbReference>
<dbReference type="GO" id="GO:0009853">
    <property type="term" value="P:photorespiration"/>
    <property type="evidence" value="ECO:0007669"/>
    <property type="project" value="UniProtKB-KW"/>
</dbReference>
<dbReference type="GO" id="GO:0019253">
    <property type="term" value="P:reductive pentose-phosphate cycle"/>
    <property type="evidence" value="ECO:0007669"/>
    <property type="project" value="UniProtKB-KW"/>
</dbReference>
<dbReference type="CDD" id="cd08212">
    <property type="entry name" value="RuBisCO_large_I"/>
    <property type="match status" value="1"/>
</dbReference>
<dbReference type="FunFam" id="3.20.20.110:FF:000001">
    <property type="entry name" value="Ribulose bisphosphate carboxylase large chain"/>
    <property type="match status" value="1"/>
</dbReference>
<dbReference type="FunFam" id="3.30.70.150:FF:000001">
    <property type="entry name" value="Ribulose bisphosphate carboxylase large chain"/>
    <property type="match status" value="1"/>
</dbReference>
<dbReference type="Gene3D" id="3.20.20.110">
    <property type="entry name" value="Ribulose bisphosphate carboxylase, large subunit, C-terminal domain"/>
    <property type="match status" value="1"/>
</dbReference>
<dbReference type="Gene3D" id="3.30.70.150">
    <property type="entry name" value="RuBisCO large subunit, N-terminal domain"/>
    <property type="match status" value="1"/>
</dbReference>
<dbReference type="HAMAP" id="MF_01338">
    <property type="entry name" value="RuBisCO_L_type1"/>
    <property type="match status" value="1"/>
</dbReference>
<dbReference type="InterPro" id="IPR033966">
    <property type="entry name" value="RuBisCO"/>
</dbReference>
<dbReference type="InterPro" id="IPR020878">
    <property type="entry name" value="RuBisCo_large_chain_AS"/>
</dbReference>
<dbReference type="InterPro" id="IPR000685">
    <property type="entry name" value="RuBisCO_lsu_C"/>
</dbReference>
<dbReference type="InterPro" id="IPR036376">
    <property type="entry name" value="RuBisCO_lsu_C_sf"/>
</dbReference>
<dbReference type="InterPro" id="IPR017443">
    <property type="entry name" value="RuBisCO_lsu_fd_N"/>
</dbReference>
<dbReference type="InterPro" id="IPR036422">
    <property type="entry name" value="RuBisCO_lsu_N_sf"/>
</dbReference>
<dbReference type="InterPro" id="IPR020888">
    <property type="entry name" value="RuBisCO_lsuI"/>
</dbReference>
<dbReference type="NCBIfam" id="NF003252">
    <property type="entry name" value="PRK04208.1"/>
    <property type="match status" value="1"/>
</dbReference>
<dbReference type="PANTHER" id="PTHR42704">
    <property type="entry name" value="RIBULOSE BISPHOSPHATE CARBOXYLASE"/>
    <property type="match status" value="1"/>
</dbReference>
<dbReference type="PANTHER" id="PTHR42704:SF16">
    <property type="entry name" value="RIBULOSE BISPHOSPHATE CARBOXYLASE LARGE CHAIN"/>
    <property type="match status" value="1"/>
</dbReference>
<dbReference type="Pfam" id="PF00016">
    <property type="entry name" value="RuBisCO_large"/>
    <property type="match status" value="1"/>
</dbReference>
<dbReference type="Pfam" id="PF02788">
    <property type="entry name" value="RuBisCO_large_N"/>
    <property type="match status" value="1"/>
</dbReference>
<dbReference type="SFLD" id="SFLDG01052">
    <property type="entry name" value="RuBisCO"/>
    <property type="match status" value="1"/>
</dbReference>
<dbReference type="SFLD" id="SFLDS00014">
    <property type="entry name" value="RuBisCO"/>
    <property type="match status" value="1"/>
</dbReference>
<dbReference type="SFLD" id="SFLDG00301">
    <property type="entry name" value="RuBisCO-like_proteins"/>
    <property type="match status" value="1"/>
</dbReference>
<dbReference type="SUPFAM" id="SSF51649">
    <property type="entry name" value="RuBisCo, C-terminal domain"/>
    <property type="match status" value="1"/>
</dbReference>
<dbReference type="SUPFAM" id="SSF54966">
    <property type="entry name" value="RuBisCO, large subunit, small (N-terminal) domain"/>
    <property type="match status" value="1"/>
</dbReference>
<dbReference type="PROSITE" id="PS00157">
    <property type="entry name" value="RUBISCO_LARGE"/>
    <property type="match status" value="1"/>
</dbReference>
<protein>
    <recommendedName>
        <fullName evidence="1">Ribulose bisphosphate carboxylase large chain</fullName>
        <shortName evidence="1">RuBisCO large subunit</shortName>
        <ecNumber evidence="1">4.1.1.39</ecNumber>
    </recommendedName>
</protein>
<proteinExistence type="inferred from homology"/>
<accession>P69582</accession>
<accession>P52781</accession>
<sequence>SVGFKAGVKDYKLTYYTPDYKTKDTDILAAFRVTPQPGVPPEEAGAAVAAESSTGTWTTVWTDGLTSLDRYKGRCYHIEPVAGEESQFIAYVAYPLDLFEEGSVTNMFTSIVGNVFGFKALRALRLEDLRIPNAYVKTFQGPPHGIQVERDKLNKYGRPLLGCTIKPKLGLSAKNYGRAVYECLRGGLDFTKDDENVNSQPFMRWRDRFLFCAEALYKAQAETGEIKGHYLNATAGTCEEMIKRAVFARELGVPIVMHDYLTGGFTANTTLAHYCRDNGLLLHIHRAMHAVIDRQKNHGMHFRVLAKALRLSGGDHIHSGTVVGKLEGEREITLGFVDLLRDDFVEKDRSRGIYFTQDWVSLPGVLPVASGGIHVWHMPALTEIFGDDSVLQFGGGTLGHPWGNAPGAVANRVALEACVQARNEGRDLASEGNQIIREASKWSPELAAACEVWKE</sequence>
<reference key="1">
    <citation type="journal article" date="1995" name="Bot. Acta">
        <title>Molecular phylogeny of the Papilionoideae (family Leguminosae): rbcL sequences versus chemical taxonomy.</title>
        <authorList>
            <person name="Kaess E."/>
            <person name="Wink M."/>
        </authorList>
    </citation>
    <scope>NUCLEOTIDE SEQUENCE [GENOMIC DNA]</scope>
    <source>
        <tissue>Leaf</tissue>
    </source>
</reference>
<evidence type="ECO:0000255" key="1">
    <source>
        <dbReference type="HAMAP-Rule" id="MF_01338"/>
    </source>
</evidence>
<name>RBL_LUPLA</name>
<keyword id="KW-0113">Calvin cycle</keyword>
<keyword id="KW-0120">Carbon dioxide fixation</keyword>
<keyword id="KW-0150">Chloroplast</keyword>
<keyword id="KW-1015">Disulfide bond</keyword>
<keyword id="KW-0456">Lyase</keyword>
<keyword id="KW-0460">Magnesium</keyword>
<keyword id="KW-0479">Metal-binding</keyword>
<keyword id="KW-0488">Methylation</keyword>
<keyword id="KW-0503">Monooxygenase</keyword>
<keyword id="KW-0560">Oxidoreductase</keyword>
<keyword id="KW-0601">Photorespiration</keyword>
<keyword id="KW-0602">Photosynthesis</keyword>
<keyword id="KW-0934">Plastid</keyword>
<gene>
    <name evidence="1" type="primary">rbcL</name>
</gene>